<evidence type="ECO:0000255" key="1">
    <source>
        <dbReference type="HAMAP-Rule" id="MF_00063"/>
    </source>
</evidence>
<evidence type="ECO:0007829" key="2">
    <source>
        <dbReference type="PDB" id="6VPU"/>
    </source>
</evidence>
<proteinExistence type="evidence at protein level"/>
<accession>Q8CWK6</accession>
<gene>
    <name evidence="1" type="primary">cysH</name>
    <name type="ordered locus">VV1_1404</name>
</gene>
<keyword id="KW-0002">3D-structure</keyword>
<keyword id="KW-0963">Cytoplasm</keyword>
<keyword id="KW-0560">Oxidoreductase</keyword>
<reference key="1">
    <citation type="submission" date="2002-12" db="EMBL/GenBank/DDBJ databases">
        <title>Complete genome sequence of Vibrio vulnificus CMCP6.</title>
        <authorList>
            <person name="Rhee J.H."/>
            <person name="Kim S.Y."/>
            <person name="Chung S.S."/>
            <person name="Kim J.J."/>
            <person name="Moon Y.H."/>
            <person name="Jeong H."/>
            <person name="Choy H.E."/>
        </authorList>
    </citation>
    <scope>NUCLEOTIDE SEQUENCE [LARGE SCALE GENOMIC DNA]</scope>
    <source>
        <strain>CMCP6</strain>
    </source>
</reference>
<name>CYSH_VIBVU</name>
<feature type="chain" id="PRO_0000100654" description="Phosphoadenosine 5'-phosphosulfate reductase">
    <location>
        <begin position="1"/>
        <end position="258"/>
    </location>
</feature>
<feature type="active site" description="Nucleophile; cysteine thiosulfonate intermediate" evidence="1">
    <location>
        <position position="244"/>
    </location>
</feature>
<feature type="helix" evidence="2">
    <location>
        <begin position="11"/>
        <end position="15"/>
    </location>
</feature>
<feature type="helix" evidence="2">
    <location>
        <begin position="19"/>
        <end position="25"/>
    </location>
</feature>
<feature type="helix" evidence="2">
    <location>
        <begin position="27"/>
        <end position="34"/>
    </location>
</feature>
<feature type="helix" evidence="2">
    <location>
        <begin position="38"/>
        <end position="48"/>
    </location>
</feature>
<feature type="strand" evidence="2">
    <location>
        <begin position="53"/>
        <end position="56"/>
    </location>
</feature>
<feature type="turn" evidence="2">
    <location>
        <begin position="61"/>
        <end position="63"/>
    </location>
</feature>
<feature type="helix" evidence="2">
    <location>
        <begin position="64"/>
        <end position="71"/>
    </location>
</feature>
<feature type="strand" evidence="2">
    <location>
        <begin position="78"/>
        <end position="82"/>
    </location>
</feature>
<feature type="helix" evidence="2">
    <location>
        <begin position="89"/>
        <end position="101"/>
    </location>
</feature>
<feature type="strand" evidence="2">
    <location>
        <begin position="105"/>
        <end position="109"/>
    </location>
</feature>
<feature type="helix" evidence="2">
    <location>
        <begin position="115"/>
        <end position="122"/>
    </location>
</feature>
<feature type="helix" evidence="2">
    <location>
        <begin position="125"/>
        <end position="127"/>
    </location>
</feature>
<feature type="helix" evidence="2">
    <location>
        <begin position="129"/>
        <end position="140"/>
    </location>
</feature>
<feature type="helix" evidence="2">
    <location>
        <begin position="142"/>
        <end position="151"/>
    </location>
</feature>
<feature type="strand" evidence="2">
    <location>
        <begin position="155"/>
        <end position="158"/>
    </location>
</feature>
<feature type="helix" evidence="2">
    <location>
        <begin position="163"/>
        <end position="165"/>
    </location>
</feature>
<feature type="helix" evidence="2">
    <location>
        <begin position="167"/>
        <end position="169"/>
    </location>
</feature>
<feature type="strand" evidence="2">
    <location>
        <begin position="174"/>
        <end position="178"/>
    </location>
</feature>
<feature type="strand" evidence="2">
    <location>
        <begin position="181"/>
        <end position="184"/>
    </location>
</feature>
<feature type="turn" evidence="2">
    <location>
        <begin position="186"/>
        <end position="189"/>
    </location>
</feature>
<feature type="helix" evidence="2">
    <location>
        <begin position="192"/>
        <end position="201"/>
    </location>
</feature>
<feature type="helix" evidence="2">
    <location>
        <begin position="210"/>
        <end position="212"/>
    </location>
</feature>
<feature type="turn" evidence="2">
    <location>
        <begin position="220"/>
        <end position="222"/>
    </location>
</feature>
<sequence>MLDSVASTLQLSELLSLTKAEQSIRLAEINVELEMLSAQERVAWALQNLEGAHAVSSSFGIQAAVMLHLVSKQQADIPVILTDTGYLFPETYQFIDELTKSLNLNLKVYRANESANWQEARYGKLWEQGIEGIEKYNKLNKVEPMRRALNELNVKTWFSGLRREQSQSRAGLPILSIQNGVFKFLPVVDWSNKDVHYYLKEHGLSYHPLWEQGYLSVGDTHTTQKWEPGMSEEETRFFGLKRECGLHEEDNEQDGSGI</sequence>
<comment type="function">
    <text evidence="1">Catalyzes the formation of sulfite from phosphoadenosine 5'-phosphosulfate (PAPS) using thioredoxin as an electron donor.</text>
</comment>
<comment type="catalytic activity">
    <reaction evidence="1">
        <text>[thioredoxin]-disulfide + sulfite + adenosine 3',5'-bisphosphate + 2 H(+) = [thioredoxin]-dithiol + 3'-phosphoadenylyl sulfate</text>
        <dbReference type="Rhea" id="RHEA:11724"/>
        <dbReference type="Rhea" id="RHEA-COMP:10698"/>
        <dbReference type="Rhea" id="RHEA-COMP:10700"/>
        <dbReference type="ChEBI" id="CHEBI:15378"/>
        <dbReference type="ChEBI" id="CHEBI:17359"/>
        <dbReference type="ChEBI" id="CHEBI:29950"/>
        <dbReference type="ChEBI" id="CHEBI:50058"/>
        <dbReference type="ChEBI" id="CHEBI:58339"/>
        <dbReference type="ChEBI" id="CHEBI:58343"/>
        <dbReference type="EC" id="1.8.4.8"/>
    </reaction>
</comment>
<comment type="pathway">
    <text evidence="1">Sulfur metabolism; hydrogen sulfide biosynthesis; sulfite from sulfate: step 3/3.</text>
</comment>
<comment type="subcellular location">
    <subcellularLocation>
        <location evidence="1">Cytoplasm</location>
    </subcellularLocation>
</comment>
<comment type="similarity">
    <text evidence="1">Belongs to the PAPS reductase family. CysH subfamily.</text>
</comment>
<protein>
    <recommendedName>
        <fullName evidence="1">Phosphoadenosine 5'-phosphosulfate reductase</fullName>
        <shortName evidence="1">PAPS reductase</shortName>
        <ecNumber evidence="1">1.8.4.8</ecNumber>
    </recommendedName>
    <alternativeName>
        <fullName evidence="1">3'-phosphoadenylylsulfate reductase</fullName>
    </alternativeName>
    <alternativeName>
        <fullName evidence="1">PAPS reductase, thioredoxin dependent</fullName>
    </alternativeName>
    <alternativeName>
        <fullName evidence="1">PAPS sulfotransferase</fullName>
    </alternativeName>
    <alternativeName>
        <fullName evidence="1">PAdoPS reductase</fullName>
    </alternativeName>
</protein>
<organism>
    <name type="scientific">Vibrio vulnificus (strain CMCP6)</name>
    <dbReference type="NCBI Taxonomy" id="216895"/>
    <lineage>
        <taxon>Bacteria</taxon>
        <taxon>Pseudomonadati</taxon>
        <taxon>Pseudomonadota</taxon>
        <taxon>Gammaproteobacteria</taxon>
        <taxon>Vibrionales</taxon>
        <taxon>Vibrionaceae</taxon>
        <taxon>Vibrio</taxon>
    </lineage>
</organism>
<dbReference type="EC" id="1.8.4.8" evidence="1"/>
<dbReference type="EMBL" id="AE016795">
    <property type="protein sequence ID" value="AAO09853.1"/>
    <property type="molecule type" value="Genomic_DNA"/>
</dbReference>
<dbReference type="RefSeq" id="WP_011079378.1">
    <property type="nucleotide sequence ID" value="NC_004459.3"/>
</dbReference>
<dbReference type="PDB" id="6VPU">
    <property type="method" value="X-ray"/>
    <property type="resolution" value="1.90 A"/>
    <property type="chains" value="A/B/C/D/E/F/G/H=1-258"/>
</dbReference>
<dbReference type="PDBsum" id="6VPU"/>
<dbReference type="SMR" id="Q8CWK6"/>
<dbReference type="KEGG" id="vvu:VV1_1404"/>
<dbReference type="HOGENOM" id="CLU_044089_3_0_6"/>
<dbReference type="UniPathway" id="UPA00140">
    <property type="reaction ID" value="UER00206"/>
</dbReference>
<dbReference type="Proteomes" id="UP000002275">
    <property type="component" value="Chromosome 1"/>
</dbReference>
<dbReference type="GO" id="GO:0005737">
    <property type="term" value="C:cytoplasm"/>
    <property type="evidence" value="ECO:0007669"/>
    <property type="project" value="UniProtKB-SubCell"/>
</dbReference>
<dbReference type="GO" id="GO:0004604">
    <property type="term" value="F:phosphoadenylyl-sulfate reductase (thioredoxin) activity"/>
    <property type="evidence" value="ECO:0007669"/>
    <property type="project" value="UniProtKB-UniRule"/>
</dbReference>
<dbReference type="GO" id="GO:0070814">
    <property type="term" value="P:hydrogen sulfide biosynthetic process"/>
    <property type="evidence" value="ECO:0007669"/>
    <property type="project" value="UniProtKB-UniRule"/>
</dbReference>
<dbReference type="GO" id="GO:0019379">
    <property type="term" value="P:sulfate assimilation, phosphoadenylyl sulfate reduction by phosphoadenylyl-sulfate reductase (thioredoxin)"/>
    <property type="evidence" value="ECO:0007669"/>
    <property type="project" value="UniProtKB-UniRule"/>
</dbReference>
<dbReference type="CDD" id="cd23945">
    <property type="entry name" value="PAPS_reductase"/>
    <property type="match status" value="1"/>
</dbReference>
<dbReference type="FunFam" id="3.40.50.620:FF:000043">
    <property type="entry name" value="Phosphoadenosine phosphosulfate reductase"/>
    <property type="match status" value="1"/>
</dbReference>
<dbReference type="Gene3D" id="3.40.50.620">
    <property type="entry name" value="HUPs"/>
    <property type="match status" value="1"/>
</dbReference>
<dbReference type="HAMAP" id="MF_00063">
    <property type="entry name" value="CysH"/>
    <property type="match status" value="1"/>
</dbReference>
<dbReference type="InterPro" id="IPR004511">
    <property type="entry name" value="PAPS/APS_Rdtase"/>
</dbReference>
<dbReference type="InterPro" id="IPR002500">
    <property type="entry name" value="PAPS_reduct_dom"/>
</dbReference>
<dbReference type="InterPro" id="IPR011800">
    <property type="entry name" value="PAPS_reductase_CysH"/>
</dbReference>
<dbReference type="InterPro" id="IPR014729">
    <property type="entry name" value="Rossmann-like_a/b/a_fold"/>
</dbReference>
<dbReference type="NCBIfam" id="TIGR00434">
    <property type="entry name" value="cysH"/>
    <property type="match status" value="1"/>
</dbReference>
<dbReference type="NCBIfam" id="TIGR02057">
    <property type="entry name" value="PAPS_reductase"/>
    <property type="match status" value="1"/>
</dbReference>
<dbReference type="NCBIfam" id="NF002537">
    <property type="entry name" value="PRK02090.1"/>
    <property type="match status" value="1"/>
</dbReference>
<dbReference type="PANTHER" id="PTHR46509">
    <property type="entry name" value="PHOSPHOADENOSINE PHOSPHOSULFATE REDUCTASE"/>
    <property type="match status" value="1"/>
</dbReference>
<dbReference type="PANTHER" id="PTHR46509:SF1">
    <property type="entry name" value="PHOSPHOADENOSINE PHOSPHOSULFATE REDUCTASE"/>
    <property type="match status" value="1"/>
</dbReference>
<dbReference type="Pfam" id="PF01507">
    <property type="entry name" value="PAPS_reduct"/>
    <property type="match status" value="1"/>
</dbReference>
<dbReference type="PIRSF" id="PIRSF000857">
    <property type="entry name" value="PAPS_reductase"/>
    <property type="match status" value="1"/>
</dbReference>
<dbReference type="SUPFAM" id="SSF52402">
    <property type="entry name" value="Adenine nucleotide alpha hydrolases-like"/>
    <property type="match status" value="1"/>
</dbReference>